<evidence type="ECO:0000255" key="1">
    <source>
        <dbReference type="HAMAP-Rule" id="MF_00037"/>
    </source>
</evidence>
<gene>
    <name evidence="1" type="primary">murB</name>
    <name type="ordered locus">SP70585_1428</name>
</gene>
<feature type="chain" id="PRO_1000117139" description="UDP-N-acetylenolpyruvoylglucosamine reductase">
    <location>
        <begin position="1"/>
        <end position="301"/>
    </location>
</feature>
<feature type="domain" description="FAD-binding PCMH-type" evidence="1">
    <location>
        <begin position="30"/>
        <end position="194"/>
    </location>
</feature>
<feature type="active site" evidence="1">
    <location>
        <position position="173"/>
    </location>
</feature>
<feature type="active site" description="Proton donor" evidence="1">
    <location>
        <position position="223"/>
    </location>
</feature>
<feature type="active site" evidence="1">
    <location>
        <position position="293"/>
    </location>
</feature>
<accession>C1C7Z0</accession>
<protein>
    <recommendedName>
        <fullName evidence="1">UDP-N-acetylenolpyruvoylglucosamine reductase</fullName>
        <ecNumber evidence="1">1.3.1.98</ecNumber>
    </recommendedName>
    <alternativeName>
        <fullName evidence="1">UDP-N-acetylmuramate dehydrogenase</fullName>
    </alternativeName>
</protein>
<dbReference type="EC" id="1.3.1.98" evidence="1"/>
<dbReference type="EMBL" id="CP000918">
    <property type="protein sequence ID" value="ACO17515.1"/>
    <property type="molecule type" value="Genomic_DNA"/>
</dbReference>
<dbReference type="RefSeq" id="WP_000116189.1">
    <property type="nucleotide sequence ID" value="NC_012468.1"/>
</dbReference>
<dbReference type="SMR" id="C1C7Z0"/>
<dbReference type="KEGG" id="snm:SP70585_1428"/>
<dbReference type="HOGENOM" id="CLU_035304_1_1_9"/>
<dbReference type="UniPathway" id="UPA00219"/>
<dbReference type="Proteomes" id="UP000002211">
    <property type="component" value="Chromosome"/>
</dbReference>
<dbReference type="GO" id="GO:0005829">
    <property type="term" value="C:cytosol"/>
    <property type="evidence" value="ECO:0007669"/>
    <property type="project" value="TreeGrafter"/>
</dbReference>
<dbReference type="GO" id="GO:0071949">
    <property type="term" value="F:FAD binding"/>
    <property type="evidence" value="ECO:0007669"/>
    <property type="project" value="InterPro"/>
</dbReference>
<dbReference type="GO" id="GO:0008762">
    <property type="term" value="F:UDP-N-acetylmuramate dehydrogenase activity"/>
    <property type="evidence" value="ECO:0007669"/>
    <property type="project" value="UniProtKB-UniRule"/>
</dbReference>
<dbReference type="GO" id="GO:0051301">
    <property type="term" value="P:cell division"/>
    <property type="evidence" value="ECO:0007669"/>
    <property type="project" value="UniProtKB-KW"/>
</dbReference>
<dbReference type="GO" id="GO:0071555">
    <property type="term" value="P:cell wall organization"/>
    <property type="evidence" value="ECO:0007669"/>
    <property type="project" value="UniProtKB-KW"/>
</dbReference>
<dbReference type="GO" id="GO:0009252">
    <property type="term" value="P:peptidoglycan biosynthetic process"/>
    <property type="evidence" value="ECO:0007669"/>
    <property type="project" value="UniProtKB-UniRule"/>
</dbReference>
<dbReference type="GO" id="GO:0008360">
    <property type="term" value="P:regulation of cell shape"/>
    <property type="evidence" value="ECO:0007669"/>
    <property type="project" value="UniProtKB-KW"/>
</dbReference>
<dbReference type="Gene3D" id="3.30.465.10">
    <property type="match status" value="1"/>
</dbReference>
<dbReference type="Gene3D" id="3.90.78.10">
    <property type="entry name" value="UDP-N-acetylenolpyruvoylglucosamine reductase, C-terminal domain"/>
    <property type="match status" value="1"/>
</dbReference>
<dbReference type="Gene3D" id="3.30.43.10">
    <property type="entry name" value="Uridine Diphospho-n-acetylenolpyruvylglucosamine Reductase, domain 2"/>
    <property type="match status" value="1"/>
</dbReference>
<dbReference type="HAMAP" id="MF_00037">
    <property type="entry name" value="MurB"/>
    <property type="match status" value="1"/>
</dbReference>
<dbReference type="InterPro" id="IPR016166">
    <property type="entry name" value="FAD-bd_PCMH"/>
</dbReference>
<dbReference type="InterPro" id="IPR036318">
    <property type="entry name" value="FAD-bd_PCMH-like_sf"/>
</dbReference>
<dbReference type="InterPro" id="IPR016167">
    <property type="entry name" value="FAD-bd_PCMH_sub1"/>
</dbReference>
<dbReference type="InterPro" id="IPR016169">
    <property type="entry name" value="FAD-bd_PCMH_sub2"/>
</dbReference>
<dbReference type="InterPro" id="IPR003170">
    <property type="entry name" value="MurB"/>
</dbReference>
<dbReference type="InterPro" id="IPR011601">
    <property type="entry name" value="MurB_C"/>
</dbReference>
<dbReference type="InterPro" id="IPR036635">
    <property type="entry name" value="MurB_C_sf"/>
</dbReference>
<dbReference type="InterPro" id="IPR006094">
    <property type="entry name" value="Oxid_FAD_bind_N"/>
</dbReference>
<dbReference type="NCBIfam" id="TIGR00179">
    <property type="entry name" value="murB"/>
    <property type="match status" value="1"/>
</dbReference>
<dbReference type="NCBIfam" id="NF010480">
    <property type="entry name" value="PRK13905.1"/>
    <property type="match status" value="1"/>
</dbReference>
<dbReference type="PANTHER" id="PTHR21071">
    <property type="entry name" value="UDP-N-ACETYLENOLPYRUVOYLGLUCOSAMINE REDUCTASE"/>
    <property type="match status" value="1"/>
</dbReference>
<dbReference type="PANTHER" id="PTHR21071:SF4">
    <property type="entry name" value="UDP-N-ACETYLENOLPYRUVOYLGLUCOSAMINE REDUCTASE"/>
    <property type="match status" value="1"/>
</dbReference>
<dbReference type="Pfam" id="PF01565">
    <property type="entry name" value="FAD_binding_4"/>
    <property type="match status" value="1"/>
</dbReference>
<dbReference type="Pfam" id="PF02873">
    <property type="entry name" value="MurB_C"/>
    <property type="match status" value="1"/>
</dbReference>
<dbReference type="SUPFAM" id="SSF56176">
    <property type="entry name" value="FAD-binding/transporter-associated domain-like"/>
    <property type="match status" value="1"/>
</dbReference>
<dbReference type="SUPFAM" id="SSF56194">
    <property type="entry name" value="Uridine diphospho-N-Acetylenolpyruvylglucosamine reductase, MurB, C-terminal domain"/>
    <property type="match status" value="1"/>
</dbReference>
<dbReference type="PROSITE" id="PS51387">
    <property type="entry name" value="FAD_PCMH"/>
    <property type="match status" value="1"/>
</dbReference>
<sequence length="301" mass="32956">MSVREKMLEILEGIDIRFQEPLHSYSYTKVGGEADYLVFPRNRFELARVVKFANQENIPWMVLGNASNIIVRDGGIRGFVILCDKLNNVSVDGYTIEAEAGANLIETTRIALRHSLTGFEFACGIPGSVGGAVFMNAGAYGGEIAHILQSCKVLTKDGEIETLSAKDLAFGYRHSAIQESGAVVLSVKFALAPGTHQVIKQEMDRLTHLRELKQPLEYPSCGSVFKRPVGHFAGQLISEAGLKGYRIGGVEVSEKHAGFMINVADGTAKDYEDLIQSVIEKVKEHSGITLEREVRILGESK</sequence>
<proteinExistence type="inferred from homology"/>
<organism>
    <name type="scientific">Streptococcus pneumoniae (strain 70585)</name>
    <dbReference type="NCBI Taxonomy" id="488221"/>
    <lineage>
        <taxon>Bacteria</taxon>
        <taxon>Bacillati</taxon>
        <taxon>Bacillota</taxon>
        <taxon>Bacilli</taxon>
        <taxon>Lactobacillales</taxon>
        <taxon>Streptococcaceae</taxon>
        <taxon>Streptococcus</taxon>
    </lineage>
</organism>
<keyword id="KW-0131">Cell cycle</keyword>
<keyword id="KW-0132">Cell division</keyword>
<keyword id="KW-0133">Cell shape</keyword>
<keyword id="KW-0961">Cell wall biogenesis/degradation</keyword>
<keyword id="KW-0963">Cytoplasm</keyword>
<keyword id="KW-0274">FAD</keyword>
<keyword id="KW-0285">Flavoprotein</keyword>
<keyword id="KW-0521">NADP</keyword>
<keyword id="KW-0560">Oxidoreductase</keyword>
<keyword id="KW-0573">Peptidoglycan synthesis</keyword>
<name>MURB_STRP7</name>
<reference key="1">
    <citation type="journal article" date="2010" name="Genome Biol.">
        <title>Structure and dynamics of the pan-genome of Streptococcus pneumoniae and closely related species.</title>
        <authorList>
            <person name="Donati C."/>
            <person name="Hiller N.L."/>
            <person name="Tettelin H."/>
            <person name="Muzzi A."/>
            <person name="Croucher N.J."/>
            <person name="Angiuoli S.V."/>
            <person name="Oggioni M."/>
            <person name="Dunning Hotopp J.C."/>
            <person name="Hu F.Z."/>
            <person name="Riley D.R."/>
            <person name="Covacci A."/>
            <person name="Mitchell T.J."/>
            <person name="Bentley S.D."/>
            <person name="Kilian M."/>
            <person name="Ehrlich G.D."/>
            <person name="Rappuoli R."/>
            <person name="Moxon E.R."/>
            <person name="Masignani V."/>
        </authorList>
    </citation>
    <scope>NUCLEOTIDE SEQUENCE [LARGE SCALE GENOMIC DNA]</scope>
    <source>
        <strain>70585</strain>
    </source>
</reference>
<comment type="function">
    <text evidence="1">Cell wall formation.</text>
</comment>
<comment type="catalytic activity">
    <reaction evidence="1">
        <text>UDP-N-acetyl-alpha-D-muramate + NADP(+) = UDP-N-acetyl-3-O-(1-carboxyvinyl)-alpha-D-glucosamine + NADPH + H(+)</text>
        <dbReference type="Rhea" id="RHEA:12248"/>
        <dbReference type="ChEBI" id="CHEBI:15378"/>
        <dbReference type="ChEBI" id="CHEBI:57783"/>
        <dbReference type="ChEBI" id="CHEBI:58349"/>
        <dbReference type="ChEBI" id="CHEBI:68483"/>
        <dbReference type="ChEBI" id="CHEBI:70757"/>
        <dbReference type="EC" id="1.3.1.98"/>
    </reaction>
</comment>
<comment type="cofactor">
    <cofactor evidence="1">
        <name>FAD</name>
        <dbReference type="ChEBI" id="CHEBI:57692"/>
    </cofactor>
</comment>
<comment type="pathway">
    <text evidence="1">Cell wall biogenesis; peptidoglycan biosynthesis.</text>
</comment>
<comment type="subcellular location">
    <subcellularLocation>
        <location evidence="1">Cytoplasm</location>
    </subcellularLocation>
</comment>
<comment type="similarity">
    <text evidence="1">Belongs to the MurB family.</text>
</comment>